<reference key="1">
    <citation type="journal article" date="1985" name="Biochim. Biophys. Acta">
        <title>Complete amino acid sequence of an alpha-amylase inhibitor in wheat kernel (0.19-inhibitor).</title>
        <authorList>
            <person name="Maeda K."/>
            <person name="Wakabayashi S."/>
            <person name="Matsubara H."/>
        </authorList>
    </citation>
    <scope>PROTEIN SEQUENCE</scope>
</reference>
<reference key="2">
    <citation type="journal article" date="1997" name="J. Biochem.">
        <title>Overexpression in Escherichia coli of chemically synthesized gene for active 0.19 alpha-amylase inhibitor from wheat kernel.</title>
        <authorList>
            <person name="Okuda M."/>
            <person name="Satoh T."/>
            <person name="Sakurai N."/>
            <person name="Shibuya K."/>
            <person name="Kaji H."/>
            <person name="Samejima T."/>
        </authorList>
    </citation>
    <scope>NUCLEOTIDE SEQUENCE [MRNA]</scope>
    <source>
        <tissue>Kernel</tissue>
    </source>
</reference>
<reference key="3">
    <citation type="journal article" date="2011" name="Clin. Exp. Allergy">
        <title>A new approach to the isolation and characterization of wheat flour allergens.</title>
        <authorList>
            <person name="Sotkovsky P."/>
            <person name="Sklenar J."/>
            <person name="Halada P."/>
            <person name="Cinova J."/>
            <person name="Setinova I."/>
            <person name="Kainarova A."/>
            <person name="Golias J."/>
            <person name="Pavlaskova K."/>
            <person name="Honzova S."/>
            <person name="Tuckova L."/>
        </authorList>
    </citation>
    <scope>IDENTIFICATION BY MASS SPECTROMETRY</scope>
    <scope>ALLERGEN</scope>
</reference>
<reference key="4">
    <citation type="journal article" date="1997" name="Biochemistry">
        <title>Tertiary and quaternary structures of 0.19 alpha-amylase inhibitor from wheat kernel determined by X-ray analysis at 2.06-A resolution.</title>
        <authorList>
            <person name="Oda Y."/>
            <person name="Matsunaga T."/>
            <person name="Fukuyama K."/>
            <person name="Miyazaki T."/>
            <person name="Morimoto T."/>
        </authorList>
    </citation>
    <scope>X-RAY CRYSTALLOGRAPHY (2.06 ANGSTROMS)</scope>
    <scope>DISULFIDE BONDS</scope>
</reference>
<dbReference type="EMBL" id="AB003682">
    <property type="protein sequence ID" value="BAA20139.1"/>
    <property type="molecule type" value="mRNA"/>
</dbReference>
<dbReference type="PIR" id="A01324">
    <property type="entry name" value="WIWTA1"/>
</dbReference>
<dbReference type="PDB" id="1HSS">
    <property type="method" value="X-ray"/>
    <property type="resolution" value="2.06 A"/>
    <property type="chains" value="A/B/C/D=1-124"/>
</dbReference>
<dbReference type="PDBsum" id="1HSS"/>
<dbReference type="SMR" id="P01085"/>
<dbReference type="STRING" id="4565.P01085"/>
<dbReference type="Allergome" id="8186">
    <property type="allergen name" value="Tri a 28"/>
</dbReference>
<dbReference type="PaxDb" id="4565-Traes_3DS_D718FF51C1.2"/>
<dbReference type="EvolutionaryTrace" id="P01085"/>
<dbReference type="Proteomes" id="UP000019116">
    <property type="component" value="Unplaced"/>
</dbReference>
<dbReference type="ExpressionAtlas" id="P01085">
    <property type="expression patterns" value="baseline"/>
</dbReference>
<dbReference type="GO" id="GO:0005576">
    <property type="term" value="C:extracellular region"/>
    <property type="evidence" value="ECO:0007669"/>
    <property type="project" value="UniProtKB-SubCell"/>
</dbReference>
<dbReference type="GO" id="GO:0015066">
    <property type="term" value="F:alpha-amylase inhibitor activity"/>
    <property type="evidence" value="ECO:0007669"/>
    <property type="project" value="UniProtKB-KW"/>
</dbReference>
<dbReference type="GO" id="GO:0019863">
    <property type="term" value="F:IgE binding"/>
    <property type="evidence" value="ECO:0000314"/>
    <property type="project" value="UniProtKB"/>
</dbReference>
<dbReference type="GO" id="GO:0004867">
    <property type="term" value="F:serine-type endopeptidase inhibitor activity"/>
    <property type="evidence" value="ECO:0007669"/>
    <property type="project" value="InterPro"/>
</dbReference>
<dbReference type="CDD" id="cd00261">
    <property type="entry name" value="AAI_SS"/>
    <property type="match status" value="1"/>
</dbReference>
<dbReference type="FunFam" id="1.10.110.10:FF:000004">
    <property type="entry name" value="Alpha-amylase inhibitor 0.19"/>
    <property type="match status" value="1"/>
</dbReference>
<dbReference type="Gene3D" id="1.10.110.10">
    <property type="entry name" value="Plant lipid-transfer and hydrophobic proteins"/>
    <property type="match status" value="1"/>
</dbReference>
<dbReference type="InterPro" id="IPR006106">
    <property type="entry name" value="Allergen/soft/tryp_amyl_inhib"/>
</dbReference>
<dbReference type="InterPro" id="IPR006105">
    <property type="entry name" value="Allergen/tryp_amyl_inhib_CS"/>
</dbReference>
<dbReference type="InterPro" id="IPR036312">
    <property type="entry name" value="Bifun_inhib/LTP/seed_sf"/>
</dbReference>
<dbReference type="InterPro" id="IPR016140">
    <property type="entry name" value="Bifunc_inhib/LTP/seed_store"/>
</dbReference>
<dbReference type="PANTHER" id="PTHR34481:SF8">
    <property type="entry name" value="SEED ALLERGENIC PROTEIN RAG1"/>
    <property type="match status" value="1"/>
</dbReference>
<dbReference type="PANTHER" id="PTHR34481">
    <property type="entry name" value="TRYPSIN/FACTOR XIIA INHIBITOR-RELATED"/>
    <property type="match status" value="1"/>
</dbReference>
<dbReference type="Pfam" id="PF00234">
    <property type="entry name" value="Tryp_alpha_amyl"/>
    <property type="match status" value="1"/>
</dbReference>
<dbReference type="PIRSF" id="PIRSF001657">
    <property type="entry name" value="Allergen/amylase_inhib"/>
    <property type="match status" value="1"/>
</dbReference>
<dbReference type="PRINTS" id="PR00808">
    <property type="entry name" value="AMLASEINHBTR"/>
</dbReference>
<dbReference type="SMART" id="SM00499">
    <property type="entry name" value="AAI"/>
    <property type="match status" value="1"/>
</dbReference>
<dbReference type="SUPFAM" id="SSF47699">
    <property type="entry name" value="Bifunctional inhibitor/lipid-transfer protein/seed storage 2S albumin"/>
    <property type="match status" value="1"/>
</dbReference>
<dbReference type="PROSITE" id="PS00426">
    <property type="entry name" value="CEREAL_TRYP_AMYL_INH"/>
    <property type="match status" value="1"/>
</dbReference>
<keyword id="KW-0002">3D-structure</keyword>
<keyword id="KW-0020">Allergen</keyword>
<keyword id="KW-0022">Alpha-amylase inhibitor</keyword>
<keyword id="KW-0903">Direct protein sequencing</keyword>
<keyword id="KW-1015">Disulfide bond</keyword>
<keyword id="KW-1185">Reference proteome</keyword>
<keyword id="KW-0964">Secreted</keyword>
<feature type="chain" id="PRO_0000070484" description="Alpha-amylase inhibitor 0.19">
    <location>
        <begin position="1"/>
        <end position="124"/>
    </location>
</feature>
<feature type="disulfide bond" evidence="2 4">
    <location>
        <begin position="6"/>
        <end position="52"/>
    </location>
</feature>
<feature type="disulfide bond" evidence="2 4">
    <location>
        <begin position="20"/>
        <end position="41"/>
    </location>
</feature>
<feature type="disulfide bond" evidence="2 4">
    <location>
        <begin position="28"/>
        <end position="83"/>
    </location>
</feature>
<feature type="disulfide bond" evidence="2 4">
    <location>
        <begin position="42"/>
        <end position="99"/>
    </location>
</feature>
<feature type="disulfide bond" evidence="2 4">
    <location>
        <begin position="54"/>
        <end position="115"/>
    </location>
</feature>
<feature type="turn" evidence="5">
    <location>
        <begin position="8"/>
        <end position="10"/>
    </location>
</feature>
<feature type="helix" evidence="5">
    <location>
        <begin position="20"/>
        <end position="27"/>
    </location>
</feature>
<feature type="turn" evidence="5">
    <location>
        <begin position="28"/>
        <end position="30"/>
    </location>
</feature>
<feature type="helix" evidence="5">
    <location>
        <begin position="35"/>
        <end position="46"/>
    </location>
</feature>
<feature type="turn" evidence="5">
    <location>
        <begin position="50"/>
        <end position="52"/>
    </location>
</feature>
<feature type="helix" evidence="5">
    <location>
        <begin position="53"/>
        <end position="67"/>
    </location>
</feature>
<feature type="helix" evidence="5">
    <location>
        <begin position="85"/>
        <end position="92"/>
    </location>
</feature>
<feature type="helix" evidence="5">
    <location>
        <begin position="95"/>
        <end position="98"/>
    </location>
</feature>
<feature type="strand" evidence="5">
    <location>
        <begin position="111"/>
        <end position="114"/>
    </location>
</feature>
<feature type="helix" evidence="5">
    <location>
        <begin position="116"/>
        <end position="119"/>
    </location>
</feature>
<feature type="turn" evidence="5">
    <location>
        <begin position="120"/>
        <end position="123"/>
    </location>
</feature>
<evidence type="ECO:0000269" key="1">
    <source>
    </source>
</evidence>
<evidence type="ECO:0000269" key="2">
    <source>
    </source>
</evidence>
<evidence type="ECO:0000305" key="3"/>
<evidence type="ECO:0007744" key="4">
    <source>
        <dbReference type="PDB" id="1HSS"/>
    </source>
</evidence>
<evidence type="ECO:0007829" key="5">
    <source>
        <dbReference type="PDB" id="1HSS"/>
    </source>
</evidence>
<accession>P01085</accession>
<name>IAA1_WHEAT</name>
<proteinExistence type="evidence at protein level"/>
<comment type="function">
    <text>Alpha-amylase inhibitor.</text>
</comment>
<comment type="subunit">
    <text>Homodimer.</text>
</comment>
<comment type="subcellular location">
    <subcellularLocation>
        <location>Secreted</location>
    </subcellularLocation>
</comment>
<comment type="tissue specificity">
    <text>Endosperm.</text>
</comment>
<comment type="PTM">
    <text>The disulfide bonds are essential for the inhibitor activity.</text>
</comment>
<comment type="allergen">
    <text evidence="1">Causes an allergic reaction in human. Binds to IgE.</text>
</comment>
<comment type="similarity">
    <text evidence="3">Belongs to the protease inhibitor I6 (cereal trypsin/alpha-amylase inhibitor) family.</text>
</comment>
<protein>
    <recommendedName>
        <fullName>Alpha-amylase inhibitor 0.19</fullName>
    </recommendedName>
    <alternativeName>
        <fullName>0.19 alpha-AI</fullName>
        <shortName>0.19 AI</shortName>
    </alternativeName>
    <allergenName>Tri a 28</allergenName>
</protein>
<sequence length="124" mass="13337">SGPWMCYPGQAFQVPALPACRPLLRLQCNGSQVPEAVLRDCCQQLAHISEWCRCGALYSMLDSMYKEHGAQEGQAGTGAFPRCRREVVKLTAASITAVCRLPIVVDASGDGAYVCKDVAAYPDA</sequence>
<organism>
    <name type="scientific">Triticum aestivum</name>
    <name type="common">Wheat</name>
    <dbReference type="NCBI Taxonomy" id="4565"/>
    <lineage>
        <taxon>Eukaryota</taxon>
        <taxon>Viridiplantae</taxon>
        <taxon>Streptophyta</taxon>
        <taxon>Embryophyta</taxon>
        <taxon>Tracheophyta</taxon>
        <taxon>Spermatophyta</taxon>
        <taxon>Magnoliopsida</taxon>
        <taxon>Liliopsida</taxon>
        <taxon>Poales</taxon>
        <taxon>Poaceae</taxon>
        <taxon>BOP clade</taxon>
        <taxon>Pooideae</taxon>
        <taxon>Triticodae</taxon>
        <taxon>Triticeae</taxon>
        <taxon>Triticinae</taxon>
        <taxon>Triticum</taxon>
    </lineage>
</organism>